<gene>
    <name type="ORF">PY01791</name>
</gene>
<sequence length="201" mass="23897">MPKYYCEYCDIYLTHSSPVGRRQHNQGRKHISAKIEYFQNLLREEGITPQNFLGFLGNQGYNNALANPMMNNFMPGNYNAYMKYNPMRNYHHSNRNPNYQHSIGMHNNKYSRAGYVPPGSNKYPNNHFHNNKRINNIQKPYNNFDNKNNNYNNKPITNSSYKNDKQDYRNNNENNDNMNSNHFSNYQMNKENANFVNKNNE</sequence>
<protein>
    <recommendedName>
        <fullName evidence="1">U1 small nuclear ribonucleoprotein C</fullName>
        <shortName evidence="1">U1 snRNP C</shortName>
        <shortName evidence="1">U1-C</shortName>
        <shortName evidence="1">U1C</shortName>
    </recommendedName>
</protein>
<evidence type="ECO:0000255" key="1">
    <source>
        <dbReference type="HAMAP-Rule" id="MF_03153"/>
    </source>
</evidence>
<evidence type="ECO:0000256" key="2">
    <source>
        <dbReference type="SAM" id="MobiDB-lite"/>
    </source>
</evidence>
<organism>
    <name type="scientific">Plasmodium yoelii yoelii</name>
    <dbReference type="NCBI Taxonomy" id="73239"/>
    <lineage>
        <taxon>Eukaryota</taxon>
        <taxon>Sar</taxon>
        <taxon>Alveolata</taxon>
        <taxon>Apicomplexa</taxon>
        <taxon>Aconoidasida</taxon>
        <taxon>Haemosporida</taxon>
        <taxon>Plasmodiidae</taxon>
        <taxon>Plasmodium</taxon>
        <taxon>Plasmodium (Vinckeia)</taxon>
    </lineage>
</organism>
<proteinExistence type="inferred from homology"/>
<feature type="chain" id="PRO_0000414278" description="U1 small nuclear ribonucleoprotein C">
    <location>
        <begin position="1"/>
        <end position="201"/>
    </location>
</feature>
<feature type="zinc finger region" description="Matrin-type" evidence="1">
    <location>
        <begin position="4"/>
        <end position="36"/>
    </location>
</feature>
<feature type="region of interest" description="Disordered" evidence="2">
    <location>
        <begin position="137"/>
        <end position="176"/>
    </location>
</feature>
<feature type="compositionally biased region" description="Low complexity" evidence="2">
    <location>
        <begin position="137"/>
        <end position="154"/>
    </location>
</feature>
<name>RU1C_PLAYO</name>
<dbReference type="EMBL" id="AABL01000484">
    <property type="protein sequence ID" value="EAA21158.1"/>
    <property type="molecule type" value="Genomic_DNA"/>
</dbReference>
<dbReference type="SMR" id="Q7RNM5"/>
<dbReference type="FunCoup" id="Q7RNM5">
    <property type="interactions" value="77"/>
</dbReference>
<dbReference type="STRING" id="73239.Q7RNM5"/>
<dbReference type="PaxDb" id="73239-Q7RNM5"/>
<dbReference type="EnsemblProtists" id="EAA21158">
    <property type="protein sequence ID" value="EAA21158"/>
    <property type="gene ID" value="EAA21158"/>
</dbReference>
<dbReference type="KEGG" id="pyo:PY17X_1426800"/>
<dbReference type="VEuPathDB" id="PlasmoDB:Py17XNL_001401112"/>
<dbReference type="InParanoid" id="Q7RNM5"/>
<dbReference type="Proteomes" id="UP000008553">
    <property type="component" value="Unassembled WGS sequence"/>
</dbReference>
<dbReference type="GO" id="GO:0000243">
    <property type="term" value="C:commitment complex"/>
    <property type="evidence" value="ECO:0007669"/>
    <property type="project" value="UniProtKB-UniRule"/>
</dbReference>
<dbReference type="GO" id="GO:0005685">
    <property type="term" value="C:U1 snRNP"/>
    <property type="evidence" value="ECO:0007669"/>
    <property type="project" value="UniProtKB-UniRule"/>
</dbReference>
<dbReference type="GO" id="GO:0071004">
    <property type="term" value="C:U2-type prespliceosome"/>
    <property type="evidence" value="ECO:0007669"/>
    <property type="project" value="UniProtKB-UniRule"/>
</dbReference>
<dbReference type="GO" id="GO:0003729">
    <property type="term" value="F:mRNA binding"/>
    <property type="evidence" value="ECO:0007669"/>
    <property type="project" value="UniProtKB-UniRule"/>
</dbReference>
<dbReference type="GO" id="GO:0030627">
    <property type="term" value="F:pre-mRNA 5'-splice site binding"/>
    <property type="evidence" value="ECO:0007669"/>
    <property type="project" value="InterPro"/>
</dbReference>
<dbReference type="GO" id="GO:0030619">
    <property type="term" value="F:U1 snRNA binding"/>
    <property type="evidence" value="ECO:0007669"/>
    <property type="project" value="UniProtKB-UniRule"/>
</dbReference>
<dbReference type="GO" id="GO:0008270">
    <property type="term" value="F:zinc ion binding"/>
    <property type="evidence" value="ECO:0007669"/>
    <property type="project" value="UniProtKB-UniRule"/>
</dbReference>
<dbReference type="GO" id="GO:0000395">
    <property type="term" value="P:mRNA 5'-splice site recognition"/>
    <property type="evidence" value="ECO:0007669"/>
    <property type="project" value="UniProtKB-UniRule"/>
</dbReference>
<dbReference type="GO" id="GO:0000387">
    <property type="term" value="P:spliceosomal snRNP assembly"/>
    <property type="evidence" value="ECO:0007669"/>
    <property type="project" value="UniProtKB-UniRule"/>
</dbReference>
<dbReference type="FunFam" id="3.30.160.60:FF:000890">
    <property type="entry name" value="U1 small nuclear ribonucleoprotein C"/>
    <property type="match status" value="1"/>
</dbReference>
<dbReference type="Gene3D" id="3.30.160.60">
    <property type="entry name" value="Classic Zinc Finger"/>
    <property type="match status" value="1"/>
</dbReference>
<dbReference type="HAMAP" id="MF_03153">
    <property type="entry name" value="U1_C"/>
    <property type="match status" value="1"/>
</dbReference>
<dbReference type="InterPro" id="IPR000690">
    <property type="entry name" value="Matrin/U1-C_Znf_C2H2"/>
</dbReference>
<dbReference type="InterPro" id="IPR003604">
    <property type="entry name" value="Matrin/U1-like-C_Znf_C2H2"/>
</dbReference>
<dbReference type="InterPro" id="IPR013085">
    <property type="entry name" value="U1-CZ_Znf_C2H2"/>
</dbReference>
<dbReference type="InterPro" id="IPR017340">
    <property type="entry name" value="U1_snRNP-C"/>
</dbReference>
<dbReference type="InterPro" id="IPR036236">
    <property type="entry name" value="Znf_C2H2_sf"/>
</dbReference>
<dbReference type="PANTHER" id="PTHR31148">
    <property type="entry name" value="U1 SMALL NUCLEAR RIBONUCLEOPROTEIN C"/>
    <property type="match status" value="1"/>
</dbReference>
<dbReference type="PANTHER" id="PTHR31148:SF1">
    <property type="entry name" value="U1 SMALL NUCLEAR RIBONUCLEOPROTEIN C"/>
    <property type="match status" value="1"/>
</dbReference>
<dbReference type="Pfam" id="PF06220">
    <property type="entry name" value="zf-U1"/>
    <property type="match status" value="1"/>
</dbReference>
<dbReference type="PIRSF" id="PIRSF037969">
    <property type="entry name" value="U1_snRNP-C"/>
    <property type="match status" value="1"/>
</dbReference>
<dbReference type="SMART" id="SM00451">
    <property type="entry name" value="ZnF_U1"/>
    <property type="match status" value="1"/>
</dbReference>
<dbReference type="SUPFAM" id="SSF57667">
    <property type="entry name" value="beta-beta-alpha zinc fingers"/>
    <property type="match status" value="1"/>
</dbReference>
<dbReference type="PROSITE" id="PS50171">
    <property type="entry name" value="ZF_MATRIN"/>
    <property type="match status" value="1"/>
</dbReference>
<comment type="function">
    <text evidence="1">Component of the spliceosomal U1 snRNP, which is essential for recognition of the pre-mRNA 5' splice-site and the subsequent assembly of the spliceosome. U1-C is directly involved in initial 5' splice-site recognition for both constitutive and regulated alternative splicing. The interaction with the 5' splice-site seems to precede base-pairing between the pre-mRNA and the U1 snRNA. Stimulates commitment or early (E) complex formation by stabilizing the base pairing of the 5' end of the U1 snRNA and the 5' splice-site region.</text>
</comment>
<comment type="subunit">
    <text evidence="1">U1 snRNP is composed of the 7 core Sm proteins B/B', D1, D2, D3, E, F and G that assemble in a heptameric protein ring on the Sm site of the small nuclear RNA to form the core snRNP, and at least 3 U1 snRNP-specific proteins U1-70K, U1-A and U1-C. U1-C interacts with U1 snRNA and the 5' splice-site region of the pre-mRNA.</text>
</comment>
<comment type="subcellular location">
    <subcellularLocation>
        <location evidence="1">Nucleus</location>
    </subcellularLocation>
</comment>
<comment type="similarity">
    <text evidence="1">Belongs to the U1 small nuclear ribonucleoprotein C family.</text>
</comment>
<reference key="1">
    <citation type="journal article" date="2002" name="Nature">
        <title>Genome sequence and comparative analysis of the model rodent malaria parasite Plasmodium yoelii yoelii.</title>
        <authorList>
            <person name="Carlton J.M."/>
            <person name="Angiuoli S.V."/>
            <person name="Suh B.B."/>
            <person name="Kooij T.W."/>
            <person name="Pertea M."/>
            <person name="Silva J.C."/>
            <person name="Ermolaeva M.D."/>
            <person name="Allen J.E."/>
            <person name="Selengut J.D."/>
            <person name="Koo H.L."/>
            <person name="Peterson J.D."/>
            <person name="Pop M."/>
            <person name="Kosack D.S."/>
            <person name="Shumway M.F."/>
            <person name="Bidwell S.L."/>
            <person name="Shallom S.J."/>
            <person name="van Aken S.E."/>
            <person name="Riedmuller S.B."/>
            <person name="Feldblyum T.V."/>
            <person name="Cho J.K."/>
            <person name="Quackenbush J."/>
            <person name="Sedegah M."/>
            <person name="Shoaibi A."/>
            <person name="Cummings L.M."/>
            <person name="Florens L."/>
            <person name="Yates J.R. III"/>
            <person name="Raine J.D."/>
            <person name="Sinden R.E."/>
            <person name="Harris M.A."/>
            <person name="Cunningham D.A."/>
            <person name="Preiser P.R."/>
            <person name="Bergman L.W."/>
            <person name="Vaidya A.B."/>
            <person name="van Lin L.H."/>
            <person name="Janse C.J."/>
            <person name="Waters A.P."/>
            <person name="Smith H.O."/>
            <person name="White O.R."/>
            <person name="Salzberg S.L."/>
            <person name="Venter J.C."/>
            <person name="Fraser C.M."/>
            <person name="Hoffman S.L."/>
            <person name="Gardner M.J."/>
            <person name="Carucci D.J."/>
        </authorList>
    </citation>
    <scope>NUCLEOTIDE SEQUENCE [LARGE SCALE GENOMIC DNA]</scope>
    <source>
        <strain>17XNL</strain>
    </source>
</reference>
<keyword id="KW-0479">Metal-binding</keyword>
<keyword id="KW-0539">Nucleus</keyword>
<keyword id="KW-1185">Reference proteome</keyword>
<keyword id="KW-0687">Ribonucleoprotein</keyword>
<keyword id="KW-0694">RNA-binding</keyword>
<keyword id="KW-0862">Zinc</keyword>
<keyword id="KW-0863">Zinc-finger</keyword>
<accession>Q7RNM5</accession>